<evidence type="ECO:0000250" key="1"/>
<evidence type="ECO:0000250" key="2">
    <source>
        <dbReference type="UniProtKB" id="P00176"/>
    </source>
</evidence>
<evidence type="ECO:0000305" key="3"/>
<accession>P12790</accession>
<accession>Q64463</accession>
<sequence>MDPSVLLLLAVLLSLFLLLVRGHAKIHGHLPPGPHPLPLLGNLLQMDRGGLLKCFIQLQEKHGDVFTVHLGPRPVVVLCGTQTIREALVDHAEAFSGRGTIAAAQLVMQDYGIFFASGQRWKTLRRFSLATMKEFGMGKRSVEERIKEEAQCLVEELKKYQGVPLDPTFLFQCITANIICSIVFGERFDYTDDQFLHLLNLMYKIFSLLSSFSGQMFELFSGFLKYFPGVHRQIVKKQQELLDYIAHSVEKHKATLDPSAPRDYIDTYLLRMEKEKSNHNTEFHHQNLMMSVLSLFFAGTETTSATLHYGVLLMLKYPHVTEKVQKEIDQVIGSHRLPTLDDRTKMPYTDAVIHEIQRFSDLVPIGLPHKVIKDTLFRGYLLPKNTEVYPVLSSALHDPQYFEQPDKFNPEHFLDANGALKKCEAFLPFSTGKRICLGESIARNELFIFFTTILQNFSVASPVAPKDIDLTPKESGIGKIPPAHQIYFLAR</sequence>
<keyword id="KW-0256">Endoplasmic reticulum</keyword>
<keyword id="KW-0349">Heme</keyword>
<keyword id="KW-0408">Iron</keyword>
<keyword id="KW-0472">Membrane</keyword>
<keyword id="KW-0479">Metal-binding</keyword>
<keyword id="KW-0492">Microsome</keyword>
<keyword id="KW-0503">Monooxygenase</keyword>
<keyword id="KW-0560">Oxidoreductase</keyword>
<keyword id="KW-0597">Phosphoprotein</keyword>
<keyword id="KW-1185">Reference proteome</keyword>
<feature type="chain" id="PRO_0000051684" description="Cytochrome P450 2B9">
    <location>
        <begin position="1"/>
        <end position="491"/>
    </location>
</feature>
<feature type="binding site" description="axial binding residue" evidence="1">
    <location>
        <position position="436"/>
    </location>
    <ligand>
        <name>heme</name>
        <dbReference type="ChEBI" id="CHEBI:30413"/>
    </ligand>
    <ligandPart>
        <name>Fe</name>
        <dbReference type="ChEBI" id="CHEBI:18248"/>
    </ligandPart>
</feature>
<feature type="modified residue" description="Phosphoserine; by PKA" evidence="2">
    <location>
        <position position="128"/>
    </location>
</feature>
<feature type="sequence conflict" description="In Ref. 1; AAA40424." evidence="3" ref="1">
    <original>A</original>
    <variation>V</variation>
    <location>
        <position position="298"/>
    </location>
</feature>
<feature type="sequence conflict" description="In Ref. 1; AAA40424." evidence="3" ref="1">
    <original>H</original>
    <variation>Q</variation>
    <location>
        <position position="412"/>
    </location>
</feature>
<name>CP2B9_MOUSE</name>
<reference key="1">
    <citation type="journal article" date="1988" name="Biochemistry">
        <title>Rip locus: regulation of female-specific isozyme (I-P-450(16 alpha)) of testosterone 16 alpha-hydroxylase in mouse liver, chromosome localization, and cloning of P-450 cDNA.</title>
        <authorList>
            <person name="Noshiro M."/>
            <person name="Lakso M."/>
            <person name="Kawajiri K."/>
            <person name="Negishi M."/>
        </authorList>
    </citation>
    <scope>NUCLEOTIDE SEQUENCE [MRNA]</scope>
    <source>
        <tissue>Liver</tissue>
    </source>
</reference>
<reference key="2">
    <citation type="journal article" date="1991" name="Eur. J. Biochem.">
        <title>Structures and characterization of sex-specific mouse cytochrome P-450 genes as members within a large family. Duplication boundary and evolution.</title>
        <authorList>
            <person name="Lakso M."/>
            <person name="Masaki R."/>
            <person name="Noshiro M."/>
            <person name="Negishi M."/>
        </authorList>
    </citation>
    <scope>NUCLEOTIDE SEQUENCE [GENOMIC DNA]</scope>
</reference>
<reference key="3">
    <citation type="journal article" date="2009" name="PLoS Biol.">
        <title>Lineage-specific biology revealed by a finished genome assembly of the mouse.</title>
        <authorList>
            <person name="Church D.M."/>
            <person name="Goodstadt L."/>
            <person name="Hillier L.W."/>
            <person name="Zody M.C."/>
            <person name="Goldstein S."/>
            <person name="She X."/>
            <person name="Bult C.J."/>
            <person name="Agarwala R."/>
            <person name="Cherry J.L."/>
            <person name="DiCuccio M."/>
            <person name="Hlavina W."/>
            <person name="Kapustin Y."/>
            <person name="Meric P."/>
            <person name="Maglott D."/>
            <person name="Birtle Z."/>
            <person name="Marques A.C."/>
            <person name="Graves T."/>
            <person name="Zhou S."/>
            <person name="Teague B."/>
            <person name="Potamousis K."/>
            <person name="Churas C."/>
            <person name="Place M."/>
            <person name="Herschleb J."/>
            <person name="Runnheim R."/>
            <person name="Forrest D."/>
            <person name="Amos-Landgraf J."/>
            <person name="Schwartz D.C."/>
            <person name="Cheng Z."/>
            <person name="Lindblad-Toh K."/>
            <person name="Eichler E.E."/>
            <person name="Ponting C.P."/>
        </authorList>
    </citation>
    <scope>NUCLEOTIDE SEQUENCE [LARGE SCALE GENOMIC DNA]</scope>
    <source>
        <strain>C57BL/6J</strain>
    </source>
</reference>
<reference key="4">
    <citation type="journal article" date="2004" name="Genome Res.">
        <title>The status, quality, and expansion of the NIH full-length cDNA project: the Mammalian Gene Collection (MGC).</title>
        <authorList>
            <consortium name="The MGC Project Team"/>
        </authorList>
    </citation>
    <scope>NUCLEOTIDE SEQUENCE [LARGE SCALE MRNA]</scope>
    <source>
        <tissue>Brain</tissue>
    </source>
</reference>
<reference key="5">
    <citation type="journal article" date="2010" name="Cell">
        <title>A tissue-specific atlas of mouse protein phosphorylation and expression.</title>
        <authorList>
            <person name="Huttlin E.L."/>
            <person name="Jedrychowski M.P."/>
            <person name="Elias J.E."/>
            <person name="Goswami T."/>
            <person name="Rad R."/>
            <person name="Beausoleil S.A."/>
            <person name="Villen J."/>
            <person name="Haas W."/>
            <person name="Sowa M.E."/>
            <person name="Gygi S.P."/>
        </authorList>
    </citation>
    <scope>IDENTIFICATION BY MASS SPECTROMETRY [LARGE SCALE ANALYSIS]</scope>
    <source>
        <tissue>Liver</tissue>
    </source>
</reference>
<comment type="function">
    <text>Cytochromes P450 are a group of heme-thiolate monooxygenases. In liver microsomes, this enzyme is involved in an NADPH-dependent electron transport pathway. It oxidizes a variety of structurally unrelated compounds, including steroids, fatty acids, and xenobiotics.</text>
</comment>
<comment type="catalytic activity">
    <reaction>
        <text>an organic molecule + reduced [NADPH--hemoprotein reductase] + O2 = an alcohol + oxidized [NADPH--hemoprotein reductase] + H2O + H(+)</text>
        <dbReference type="Rhea" id="RHEA:17149"/>
        <dbReference type="Rhea" id="RHEA-COMP:11964"/>
        <dbReference type="Rhea" id="RHEA-COMP:11965"/>
        <dbReference type="ChEBI" id="CHEBI:15377"/>
        <dbReference type="ChEBI" id="CHEBI:15378"/>
        <dbReference type="ChEBI" id="CHEBI:15379"/>
        <dbReference type="ChEBI" id="CHEBI:30879"/>
        <dbReference type="ChEBI" id="CHEBI:57618"/>
        <dbReference type="ChEBI" id="CHEBI:58210"/>
        <dbReference type="ChEBI" id="CHEBI:142491"/>
        <dbReference type="EC" id="1.14.14.1"/>
    </reaction>
</comment>
<comment type="cofactor">
    <cofactor evidence="1">
        <name>heme</name>
        <dbReference type="ChEBI" id="CHEBI:30413"/>
    </cofactor>
</comment>
<comment type="subcellular location">
    <subcellularLocation>
        <location>Endoplasmic reticulum membrane</location>
        <topology>Peripheral membrane protein</topology>
    </subcellularLocation>
    <subcellularLocation>
        <location>Microsome membrane</location>
        <topology>Peripheral membrane protein</topology>
    </subcellularLocation>
</comment>
<comment type="similarity">
    <text evidence="3">Belongs to the cytochrome P450 family.</text>
</comment>
<gene>
    <name type="primary">Cyp2b9</name>
    <name type="synonym">Cyp2b-9</name>
    <name type="synonym">Rip</name>
</gene>
<organism>
    <name type="scientific">Mus musculus</name>
    <name type="common">Mouse</name>
    <dbReference type="NCBI Taxonomy" id="10090"/>
    <lineage>
        <taxon>Eukaryota</taxon>
        <taxon>Metazoa</taxon>
        <taxon>Chordata</taxon>
        <taxon>Craniata</taxon>
        <taxon>Vertebrata</taxon>
        <taxon>Euteleostomi</taxon>
        <taxon>Mammalia</taxon>
        <taxon>Eutheria</taxon>
        <taxon>Euarchontoglires</taxon>
        <taxon>Glires</taxon>
        <taxon>Rodentia</taxon>
        <taxon>Myomorpha</taxon>
        <taxon>Muroidea</taxon>
        <taxon>Muridae</taxon>
        <taxon>Murinae</taxon>
        <taxon>Mus</taxon>
        <taxon>Mus</taxon>
    </lineage>
</organism>
<protein>
    <recommendedName>
        <fullName>Cytochrome P450 2B9</fullName>
        <ecNumber>1.14.14.1</ecNumber>
    </recommendedName>
    <alternativeName>
        <fullName>CYPIIB9</fullName>
    </alternativeName>
    <alternativeName>
        <fullName>Cytochrome P450 clone PF26</fullName>
    </alternativeName>
    <alternativeName>
        <fullName>Cytochrome P450-16-alpha</fullName>
    </alternativeName>
    <alternativeName>
        <fullName>Testosterone 16-alpha hydroxylase</fullName>
    </alternativeName>
</protein>
<dbReference type="EC" id="1.14.14.1"/>
<dbReference type="EMBL" id="M21855">
    <property type="protein sequence ID" value="AAA40424.1"/>
    <property type="molecule type" value="mRNA"/>
</dbReference>
<dbReference type="EMBL" id="M60273">
    <property type="protein sequence ID" value="AAA03648.1"/>
    <property type="molecule type" value="Genomic_DNA"/>
</dbReference>
<dbReference type="EMBL" id="M60267">
    <property type="protein sequence ID" value="AAA03648.1"/>
    <property type="status" value="JOINED"/>
    <property type="molecule type" value="Genomic_DNA"/>
</dbReference>
<dbReference type="EMBL" id="M60268">
    <property type="protein sequence ID" value="AAA03648.1"/>
    <property type="status" value="JOINED"/>
    <property type="molecule type" value="Genomic_DNA"/>
</dbReference>
<dbReference type="EMBL" id="M60269">
    <property type="protein sequence ID" value="AAA03648.1"/>
    <property type="status" value="JOINED"/>
    <property type="molecule type" value="Genomic_DNA"/>
</dbReference>
<dbReference type="EMBL" id="M60270">
    <property type="protein sequence ID" value="AAA03648.1"/>
    <property type="status" value="JOINED"/>
    <property type="molecule type" value="Genomic_DNA"/>
</dbReference>
<dbReference type="EMBL" id="M60271">
    <property type="protein sequence ID" value="AAA03648.1"/>
    <property type="status" value="JOINED"/>
    <property type="molecule type" value="Genomic_DNA"/>
</dbReference>
<dbReference type="EMBL" id="M60272">
    <property type="protein sequence ID" value="AAA03648.1"/>
    <property type="status" value="JOINED"/>
    <property type="molecule type" value="Genomic_DNA"/>
</dbReference>
<dbReference type="EMBL" id="AC157782">
    <property type="status" value="NOT_ANNOTATED_CDS"/>
    <property type="molecule type" value="Genomic_DNA"/>
</dbReference>
<dbReference type="EMBL" id="BC120525">
    <property type="protein sequence ID" value="AAI20526.1"/>
    <property type="molecule type" value="mRNA"/>
</dbReference>
<dbReference type="EMBL" id="BC120527">
    <property type="protein sequence ID" value="AAI20528.1"/>
    <property type="molecule type" value="mRNA"/>
</dbReference>
<dbReference type="CCDS" id="CCDS21001.1"/>
<dbReference type="PIR" id="A31047">
    <property type="entry name" value="A31047"/>
</dbReference>
<dbReference type="PIR" id="I84735">
    <property type="entry name" value="I84735"/>
</dbReference>
<dbReference type="RefSeq" id="NP_034130.1">
    <property type="nucleotide sequence ID" value="NM_010000.2"/>
</dbReference>
<dbReference type="SMR" id="P12790"/>
<dbReference type="FunCoup" id="P12790">
    <property type="interactions" value="1041"/>
</dbReference>
<dbReference type="STRING" id="10090.ENSMUSP00000080846"/>
<dbReference type="iPTMnet" id="P12790"/>
<dbReference type="PhosphoSitePlus" id="P12790"/>
<dbReference type="SwissPalm" id="P12790"/>
<dbReference type="jPOST" id="P12790"/>
<dbReference type="PaxDb" id="10090-ENSMUSP00000080846"/>
<dbReference type="PeptideAtlas" id="P12790"/>
<dbReference type="ProteomicsDB" id="278005"/>
<dbReference type="TopDownProteomics" id="P12790"/>
<dbReference type="DNASU" id="13094"/>
<dbReference type="Ensembl" id="ENSMUST00000082214.5">
    <property type="protein sequence ID" value="ENSMUSP00000080846.5"/>
    <property type="gene ID" value="ENSMUSG00000040660.7"/>
</dbReference>
<dbReference type="GeneID" id="13094"/>
<dbReference type="KEGG" id="mmu:13094"/>
<dbReference type="UCSC" id="uc009fuh.1">
    <property type="organism name" value="mouse"/>
</dbReference>
<dbReference type="AGR" id="MGI:88600"/>
<dbReference type="CTD" id="13094"/>
<dbReference type="MGI" id="MGI:88600">
    <property type="gene designation" value="Cyp2b9"/>
</dbReference>
<dbReference type="VEuPathDB" id="HostDB:ENSMUSG00000040660"/>
<dbReference type="eggNOG" id="KOG0156">
    <property type="taxonomic scope" value="Eukaryota"/>
</dbReference>
<dbReference type="GeneTree" id="ENSGT00940000161658"/>
<dbReference type="HOGENOM" id="CLU_001570_22_3_1"/>
<dbReference type="InParanoid" id="P12790"/>
<dbReference type="OMA" id="XTANIIC"/>
<dbReference type="OrthoDB" id="1055148at2759"/>
<dbReference type="PhylomeDB" id="P12790"/>
<dbReference type="TreeFam" id="TF352043"/>
<dbReference type="BioGRID-ORCS" id="13094">
    <property type="hits" value="0 hits in 78 CRISPR screens"/>
</dbReference>
<dbReference type="PRO" id="PR:P12790"/>
<dbReference type="Proteomes" id="UP000000589">
    <property type="component" value="Chromosome 7"/>
</dbReference>
<dbReference type="RNAct" id="P12790">
    <property type="molecule type" value="protein"/>
</dbReference>
<dbReference type="Bgee" id="ENSMUSG00000040660">
    <property type="expression patterns" value="Expressed in blastoderm cell in morula and 29 other cell types or tissues"/>
</dbReference>
<dbReference type="GO" id="GO:0005789">
    <property type="term" value="C:endoplasmic reticulum membrane"/>
    <property type="evidence" value="ECO:0007669"/>
    <property type="project" value="UniProtKB-SubCell"/>
</dbReference>
<dbReference type="GO" id="GO:0020037">
    <property type="term" value="F:heme binding"/>
    <property type="evidence" value="ECO:0007669"/>
    <property type="project" value="InterPro"/>
</dbReference>
<dbReference type="GO" id="GO:0005506">
    <property type="term" value="F:iron ion binding"/>
    <property type="evidence" value="ECO:0007669"/>
    <property type="project" value="InterPro"/>
</dbReference>
<dbReference type="GO" id="GO:0016712">
    <property type="term" value="F:oxidoreductase activity, acting on paired donors, with incorporation or reduction of molecular oxygen, reduced flavin or flavoprotein as one donor, and incorporation of one atom of oxygen"/>
    <property type="evidence" value="ECO:0007669"/>
    <property type="project" value="UniProtKB-EC"/>
</dbReference>
<dbReference type="GO" id="GO:0035634">
    <property type="term" value="P:response to stilbenoid"/>
    <property type="evidence" value="ECO:0000270"/>
    <property type="project" value="UniProtKB"/>
</dbReference>
<dbReference type="CDD" id="cd20672">
    <property type="entry name" value="CYP2B"/>
    <property type="match status" value="1"/>
</dbReference>
<dbReference type="FunFam" id="1.10.630.10:FF:000001">
    <property type="entry name" value="Cytochrome P450, family 2"/>
    <property type="match status" value="1"/>
</dbReference>
<dbReference type="Gene3D" id="1.10.630.10">
    <property type="entry name" value="Cytochrome P450"/>
    <property type="match status" value="1"/>
</dbReference>
<dbReference type="InterPro" id="IPR001128">
    <property type="entry name" value="Cyt_P450"/>
</dbReference>
<dbReference type="InterPro" id="IPR017972">
    <property type="entry name" value="Cyt_P450_CS"/>
</dbReference>
<dbReference type="InterPro" id="IPR002401">
    <property type="entry name" value="Cyt_P450_E_grp-I"/>
</dbReference>
<dbReference type="InterPro" id="IPR008068">
    <property type="entry name" value="Cyt_P450_E_grp-I_CYP2B-like"/>
</dbReference>
<dbReference type="InterPro" id="IPR036396">
    <property type="entry name" value="Cyt_P450_sf"/>
</dbReference>
<dbReference type="InterPro" id="IPR050182">
    <property type="entry name" value="Cytochrome_P450_fam2"/>
</dbReference>
<dbReference type="PANTHER" id="PTHR24300">
    <property type="entry name" value="CYTOCHROME P450 508A4-RELATED"/>
    <property type="match status" value="1"/>
</dbReference>
<dbReference type="PANTHER" id="PTHR24300:SF366">
    <property type="entry name" value="CYTOCHROME P450-RELATED"/>
    <property type="match status" value="1"/>
</dbReference>
<dbReference type="Pfam" id="PF00067">
    <property type="entry name" value="p450"/>
    <property type="match status" value="1"/>
</dbReference>
<dbReference type="PRINTS" id="PR00463">
    <property type="entry name" value="EP450I"/>
</dbReference>
<dbReference type="PRINTS" id="PR01685">
    <property type="entry name" value="EP450ICYP2B"/>
</dbReference>
<dbReference type="PRINTS" id="PR00385">
    <property type="entry name" value="P450"/>
</dbReference>
<dbReference type="SUPFAM" id="SSF48264">
    <property type="entry name" value="Cytochrome P450"/>
    <property type="match status" value="1"/>
</dbReference>
<dbReference type="PROSITE" id="PS00086">
    <property type="entry name" value="CYTOCHROME_P450"/>
    <property type="match status" value="1"/>
</dbReference>
<proteinExistence type="evidence at protein level"/>